<feature type="chain" id="PRO_0000130251" description="Small ribosomal subunit protein uS3">
    <location>
        <begin position="1"/>
        <end position="227"/>
    </location>
</feature>
<feature type="domain" description="KH type-2" evidence="1">
    <location>
        <begin position="24"/>
        <end position="94"/>
    </location>
</feature>
<feature type="region of interest" description="Disordered" evidence="2">
    <location>
        <begin position="207"/>
        <end position="227"/>
    </location>
</feature>
<protein>
    <recommendedName>
        <fullName evidence="1">Small ribosomal subunit protein uS3</fullName>
    </recommendedName>
    <alternativeName>
        <fullName evidence="3">30S ribosomal protein S3</fullName>
    </alternativeName>
</protein>
<comment type="function">
    <text evidence="1">Binds the lower part of the 30S subunit head.</text>
</comment>
<comment type="subunit">
    <text evidence="1">Part of the 30S ribosomal subunit.</text>
</comment>
<comment type="similarity">
    <text evidence="1">Belongs to the universal ribosomal protein uS3 family.</text>
</comment>
<accession>Q8TX35</accession>
<keyword id="KW-1185">Reference proteome</keyword>
<keyword id="KW-0687">Ribonucleoprotein</keyword>
<keyword id="KW-0689">Ribosomal protein</keyword>
<keyword id="KW-0694">RNA-binding</keyword>
<keyword id="KW-0699">rRNA-binding</keyword>
<name>RS3_METKA</name>
<reference key="1">
    <citation type="journal article" date="2002" name="Proc. Natl. Acad. Sci. U.S.A.">
        <title>The complete genome of hyperthermophile Methanopyrus kandleri AV19 and monophyly of archaeal methanogens.</title>
        <authorList>
            <person name="Slesarev A.I."/>
            <person name="Mezhevaya K.V."/>
            <person name="Makarova K.S."/>
            <person name="Polushin N.N."/>
            <person name="Shcherbinina O.V."/>
            <person name="Shakhova V.V."/>
            <person name="Belova G.I."/>
            <person name="Aravind L."/>
            <person name="Natale D.A."/>
            <person name="Rogozin I.B."/>
            <person name="Tatusov R.L."/>
            <person name="Wolf Y.I."/>
            <person name="Stetter K.O."/>
            <person name="Malykh A.G."/>
            <person name="Koonin E.V."/>
            <person name="Kozyavkin S.A."/>
        </authorList>
    </citation>
    <scope>NUCLEOTIDE SEQUENCE [LARGE SCALE GENOMIC DNA]</scope>
    <source>
        <strain>AV19 / DSM 6324 / JCM 9639 / NBRC 100938</strain>
    </source>
</reference>
<sequence>MVMYGENVPVHKKFVQYGMLKTELDEYLEEELGRAGYGGMRLQRVPNATKIIAYVERPAIAIGRRGRNIRRVEEEVQERFPLLGRVSIEVKELPSPELNPRVVARRLASALERGIHFRRAAYGALRRIMNAGAKGAMIILSGKLIGARARTEKFMEGAVKYCGEPGDEYMIEGYVQAVTKPGAIGVTVRIMPPDVELPDELEIRPPEEVEDELKELIGKSEDEAEGA</sequence>
<evidence type="ECO:0000255" key="1">
    <source>
        <dbReference type="HAMAP-Rule" id="MF_01309"/>
    </source>
</evidence>
<evidence type="ECO:0000256" key="2">
    <source>
        <dbReference type="SAM" id="MobiDB-lite"/>
    </source>
</evidence>
<evidence type="ECO:0000305" key="3"/>
<organism>
    <name type="scientific">Methanopyrus kandleri (strain AV19 / DSM 6324 / JCM 9639 / NBRC 100938)</name>
    <dbReference type="NCBI Taxonomy" id="190192"/>
    <lineage>
        <taxon>Archaea</taxon>
        <taxon>Methanobacteriati</taxon>
        <taxon>Methanobacteriota</taxon>
        <taxon>Methanomada group</taxon>
        <taxon>Methanopyri</taxon>
        <taxon>Methanopyrales</taxon>
        <taxon>Methanopyraceae</taxon>
        <taxon>Methanopyrus</taxon>
    </lineage>
</organism>
<gene>
    <name evidence="1" type="primary">rps3</name>
    <name type="ordered locus">MK0842</name>
</gene>
<dbReference type="EMBL" id="AE009439">
    <property type="protein sequence ID" value="AAM02055.1"/>
    <property type="molecule type" value="Genomic_DNA"/>
</dbReference>
<dbReference type="RefSeq" id="WP_011019210.1">
    <property type="nucleotide sequence ID" value="NC_003551.1"/>
</dbReference>
<dbReference type="SMR" id="Q8TX35"/>
<dbReference type="FunCoup" id="Q8TX35">
    <property type="interactions" value="168"/>
</dbReference>
<dbReference type="STRING" id="190192.MK0842"/>
<dbReference type="PaxDb" id="190192-MK0842"/>
<dbReference type="EnsemblBacteria" id="AAM02055">
    <property type="protein sequence ID" value="AAM02055"/>
    <property type="gene ID" value="MK0842"/>
</dbReference>
<dbReference type="GeneID" id="1476943"/>
<dbReference type="KEGG" id="mka:MK0842"/>
<dbReference type="PATRIC" id="fig|190192.8.peg.885"/>
<dbReference type="HOGENOM" id="CLU_058591_1_1_2"/>
<dbReference type="InParanoid" id="Q8TX35"/>
<dbReference type="OrthoDB" id="9126at2157"/>
<dbReference type="Proteomes" id="UP000001826">
    <property type="component" value="Chromosome"/>
</dbReference>
<dbReference type="GO" id="GO:0022627">
    <property type="term" value="C:cytosolic small ribosomal subunit"/>
    <property type="evidence" value="ECO:0007669"/>
    <property type="project" value="TreeGrafter"/>
</dbReference>
<dbReference type="GO" id="GO:0019843">
    <property type="term" value="F:rRNA binding"/>
    <property type="evidence" value="ECO:0007669"/>
    <property type="project" value="UniProtKB-UniRule"/>
</dbReference>
<dbReference type="GO" id="GO:0003735">
    <property type="term" value="F:structural constituent of ribosome"/>
    <property type="evidence" value="ECO:0007669"/>
    <property type="project" value="InterPro"/>
</dbReference>
<dbReference type="GO" id="GO:0006412">
    <property type="term" value="P:translation"/>
    <property type="evidence" value="ECO:0007669"/>
    <property type="project" value="UniProtKB-UniRule"/>
</dbReference>
<dbReference type="CDD" id="cd02411">
    <property type="entry name" value="KH-II_30S_S3_arch"/>
    <property type="match status" value="1"/>
</dbReference>
<dbReference type="Gene3D" id="3.30.300.20">
    <property type="match status" value="1"/>
</dbReference>
<dbReference type="Gene3D" id="3.30.1140.32">
    <property type="entry name" value="Ribosomal protein S3, C-terminal domain"/>
    <property type="match status" value="1"/>
</dbReference>
<dbReference type="HAMAP" id="MF_01309_A">
    <property type="entry name" value="Ribosomal_uS3_A"/>
    <property type="match status" value="1"/>
</dbReference>
<dbReference type="InterPro" id="IPR015946">
    <property type="entry name" value="KH_dom-like_a/b"/>
</dbReference>
<dbReference type="InterPro" id="IPR004044">
    <property type="entry name" value="KH_dom_type_2"/>
</dbReference>
<dbReference type="InterPro" id="IPR009019">
    <property type="entry name" value="KH_sf_prok-type"/>
</dbReference>
<dbReference type="InterPro" id="IPR036419">
    <property type="entry name" value="Ribosomal_S3_C_sf"/>
</dbReference>
<dbReference type="InterPro" id="IPR027488">
    <property type="entry name" value="Ribosomal_uS3_arc"/>
</dbReference>
<dbReference type="InterPro" id="IPR001351">
    <property type="entry name" value="Ribosomal_uS3_C"/>
</dbReference>
<dbReference type="InterPro" id="IPR005703">
    <property type="entry name" value="Ribosomal_uS3_euk/arc"/>
</dbReference>
<dbReference type="NCBIfam" id="NF003219">
    <property type="entry name" value="PRK04191.1"/>
    <property type="match status" value="1"/>
</dbReference>
<dbReference type="NCBIfam" id="TIGR01008">
    <property type="entry name" value="uS3_euk_arch"/>
    <property type="match status" value="1"/>
</dbReference>
<dbReference type="PANTHER" id="PTHR11760">
    <property type="entry name" value="30S/40S RIBOSOMAL PROTEIN S3"/>
    <property type="match status" value="1"/>
</dbReference>
<dbReference type="PANTHER" id="PTHR11760:SF32">
    <property type="entry name" value="SMALL RIBOSOMAL SUBUNIT PROTEIN US3"/>
    <property type="match status" value="1"/>
</dbReference>
<dbReference type="Pfam" id="PF07650">
    <property type="entry name" value="KH_2"/>
    <property type="match status" value="1"/>
</dbReference>
<dbReference type="Pfam" id="PF00189">
    <property type="entry name" value="Ribosomal_S3_C"/>
    <property type="match status" value="1"/>
</dbReference>
<dbReference type="SUPFAM" id="SSF54814">
    <property type="entry name" value="Prokaryotic type KH domain (KH-domain type II)"/>
    <property type="match status" value="1"/>
</dbReference>
<dbReference type="SUPFAM" id="SSF54821">
    <property type="entry name" value="Ribosomal protein S3 C-terminal domain"/>
    <property type="match status" value="1"/>
</dbReference>
<dbReference type="PROSITE" id="PS50823">
    <property type="entry name" value="KH_TYPE_2"/>
    <property type="match status" value="1"/>
</dbReference>
<proteinExistence type="inferred from homology"/>